<dbReference type="EC" id="5.2.1.8" evidence="1"/>
<dbReference type="EMBL" id="AP008230">
    <property type="protein sequence ID" value="BAE84994.1"/>
    <property type="molecule type" value="Genomic_DNA"/>
</dbReference>
<dbReference type="RefSeq" id="WP_011460919.1">
    <property type="nucleotide sequence ID" value="NC_007907.1"/>
</dbReference>
<dbReference type="SMR" id="Q24SJ8"/>
<dbReference type="STRING" id="138119.DSY3205"/>
<dbReference type="KEGG" id="dsy:DSY3205"/>
<dbReference type="eggNOG" id="COG0544">
    <property type="taxonomic scope" value="Bacteria"/>
</dbReference>
<dbReference type="HOGENOM" id="CLU_033058_3_2_9"/>
<dbReference type="Proteomes" id="UP000001946">
    <property type="component" value="Chromosome"/>
</dbReference>
<dbReference type="GO" id="GO:0005737">
    <property type="term" value="C:cytoplasm"/>
    <property type="evidence" value="ECO:0007669"/>
    <property type="project" value="UniProtKB-SubCell"/>
</dbReference>
<dbReference type="GO" id="GO:0003755">
    <property type="term" value="F:peptidyl-prolyl cis-trans isomerase activity"/>
    <property type="evidence" value="ECO:0007669"/>
    <property type="project" value="UniProtKB-UniRule"/>
</dbReference>
<dbReference type="GO" id="GO:0044183">
    <property type="term" value="F:protein folding chaperone"/>
    <property type="evidence" value="ECO:0007669"/>
    <property type="project" value="TreeGrafter"/>
</dbReference>
<dbReference type="GO" id="GO:0043022">
    <property type="term" value="F:ribosome binding"/>
    <property type="evidence" value="ECO:0007669"/>
    <property type="project" value="TreeGrafter"/>
</dbReference>
<dbReference type="GO" id="GO:0051083">
    <property type="term" value="P:'de novo' cotranslational protein folding"/>
    <property type="evidence" value="ECO:0007669"/>
    <property type="project" value="TreeGrafter"/>
</dbReference>
<dbReference type="GO" id="GO:0051301">
    <property type="term" value="P:cell division"/>
    <property type="evidence" value="ECO:0007669"/>
    <property type="project" value="UniProtKB-KW"/>
</dbReference>
<dbReference type="GO" id="GO:0061077">
    <property type="term" value="P:chaperone-mediated protein folding"/>
    <property type="evidence" value="ECO:0007669"/>
    <property type="project" value="TreeGrafter"/>
</dbReference>
<dbReference type="GO" id="GO:0015031">
    <property type="term" value="P:protein transport"/>
    <property type="evidence" value="ECO:0007669"/>
    <property type="project" value="UniProtKB-UniRule"/>
</dbReference>
<dbReference type="GO" id="GO:0043335">
    <property type="term" value="P:protein unfolding"/>
    <property type="evidence" value="ECO:0007669"/>
    <property type="project" value="TreeGrafter"/>
</dbReference>
<dbReference type="FunFam" id="3.10.50.40:FF:000001">
    <property type="entry name" value="Trigger factor"/>
    <property type="match status" value="1"/>
</dbReference>
<dbReference type="Gene3D" id="3.10.50.40">
    <property type="match status" value="1"/>
</dbReference>
<dbReference type="Gene3D" id="3.30.70.1050">
    <property type="entry name" value="Trigger factor ribosome-binding domain"/>
    <property type="match status" value="1"/>
</dbReference>
<dbReference type="Gene3D" id="1.10.3120.10">
    <property type="entry name" value="Trigger factor, C-terminal domain"/>
    <property type="match status" value="1"/>
</dbReference>
<dbReference type="HAMAP" id="MF_00303">
    <property type="entry name" value="Trigger_factor_Tig"/>
    <property type="match status" value="1"/>
</dbReference>
<dbReference type="InterPro" id="IPR046357">
    <property type="entry name" value="PPIase_dom_sf"/>
</dbReference>
<dbReference type="InterPro" id="IPR001179">
    <property type="entry name" value="PPIase_FKBP_dom"/>
</dbReference>
<dbReference type="InterPro" id="IPR005215">
    <property type="entry name" value="Trig_fac"/>
</dbReference>
<dbReference type="InterPro" id="IPR008880">
    <property type="entry name" value="Trigger_fac_C"/>
</dbReference>
<dbReference type="InterPro" id="IPR037041">
    <property type="entry name" value="Trigger_fac_C_sf"/>
</dbReference>
<dbReference type="InterPro" id="IPR008881">
    <property type="entry name" value="Trigger_fac_ribosome-bd_bac"/>
</dbReference>
<dbReference type="InterPro" id="IPR036611">
    <property type="entry name" value="Trigger_fac_ribosome-bd_sf"/>
</dbReference>
<dbReference type="InterPro" id="IPR027304">
    <property type="entry name" value="Trigger_fact/SurA_dom_sf"/>
</dbReference>
<dbReference type="NCBIfam" id="TIGR00115">
    <property type="entry name" value="tig"/>
    <property type="match status" value="1"/>
</dbReference>
<dbReference type="PANTHER" id="PTHR30560">
    <property type="entry name" value="TRIGGER FACTOR CHAPERONE AND PEPTIDYL-PROLYL CIS/TRANS ISOMERASE"/>
    <property type="match status" value="1"/>
</dbReference>
<dbReference type="PANTHER" id="PTHR30560:SF3">
    <property type="entry name" value="TRIGGER FACTOR-LIKE PROTEIN TIG, CHLOROPLASTIC"/>
    <property type="match status" value="1"/>
</dbReference>
<dbReference type="Pfam" id="PF00254">
    <property type="entry name" value="FKBP_C"/>
    <property type="match status" value="1"/>
</dbReference>
<dbReference type="Pfam" id="PF05698">
    <property type="entry name" value="Trigger_C"/>
    <property type="match status" value="1"/>
</dbReference>
<dbReference type="Pfam" id="PF05697">
    <property type="entry name" value="Trigger_N"/>
    <property type="match status" value="1"/>
</dbReference>
<dbReference type="PIRSF" id="PIRSF003095">
    <property type="entry name" value="Trigger_factor"/>
    <property type="match status" value="1"/>
</dbReference>
<dbReference type="SUPFAM" id="SSF54534">
    <property type="entry name" value="FKBP-like"/>
    <property type="match status" value="1"/>
</dbReference>
<dbReference type="SUPFAM" id="SSF109998">
    <property type="entry name" value="Triger factor/SurA peptide-binding domain-like"/>
    <property type="match status" value="1"/>
</dbReference>
<dbReference type="SUPFAM" id="SSF102735">
    <property type="entry name" value="Trigger factor ribosome-binding domain"/>
    <property type="match status" value="1"/>
</dbReference>
<dbReference type="PROSITE" id="PS50059">
    <property type="entry name" value="FKBP_PPIASE"/>
    <property type="match status" value="1"/>
</dbReference>
<reference key="1">
    <citation type="journal article" date="2006" name="J. Bacteriol.">
        <title>Complete genome sequence of the dehalorespiring bacterium Desulfitobacterium hafniense Y51 and comparison with Dehalococcoides ethenogenes 195.</title>
        <authorList>
            <person name="Nonaka H."/>
            <person name="Keresztes G."/>
            <person name="Shinoda Y."/>
            <person name="Ikenaga Y."/>
            <person name="Abe M."/>
            <person name="Naito K."/>
            <person name="Inatomi K."/>
            <person name="Furukawa K."/>
            <person name="Inui M."/>
            <person name="Yukawa H."/>
        </authorList>
    </citation>
    <scope>NUCLEOTIDE SEQUENCE [LARGE SCALE GENOMIC DNA]</scope>
    <source>
        <strain>Y51</strain>
    </source>
</reference>
<organism>
    <name type="scientific">Desulfitobacterium hafniense (strain Y51)</name>
    <dbReference type="NCBI Taxonomy" id="138119"/>
    <lineage>
        <taxon>Bacteria</taxon>
        <taxon>Bacillati</taxon>
        <taxon>Bacillota</taxon>
        <taxon>Clostridia</taxon>
        <taxon>Eubacteriales</taxon>
        <taxon>Desulfitobacteriaceae</taxon>
        <taxon>Desulfitobacterium</taxon>
    </lineage>
</organism>
<keyword id="KW-0131">Cell cycle</keyword>
<keyword id="KW-0132">Cell division</keyword>
<keyword id="KW-0143">Chaperone</keyword>
<keyword id="KW-0963">Cytoplasm</keyword>
<keyword id="KW-0413">Isomerase</keyword>
<keyword id="KW-1185">Reference proteome</keyword>
<keyword id="KW-0697">Rotamase</keyword>
<protein>
    <recommendedName>
        <fullName evidence="1">Trigger factor 1</fullName>
        <shortName evidence="1">TF 1</shortName>
        <ecNumber evidence="1">5.2.1.8</ecNumber>
    </recommendedName>
    <alternativeName>
        <fullName evidence="1">PPIase</fullName>
    </alternativeName>
</protein>
<comment type="function">
    <text evidence="1">Involved in protein export. Acts as a chaperone by maintaining the newly synthesized protein in an open conformation. Functions as a peptidyl-prolyl cis-trans isomerase.</text>
</comment>
<comment type="catalytic activity">
    <reaction evidence="1">
        <text>[protein]-peptidylproline (omega=180) = [protein]-peptidylproline (omega=0)</text>
        <dbReference type="Rhea" id="RHEA:16237"/>
        <dbReference type="Rhea" id="RHEA-COMP:10747"/>
        <dbReference type="Rhea" id="RHEA-COMP:10748"/>
        <dbReference type="ChEBI" id="CHEBI:83833"/>
        <dbReference type="ChEBI" id="CHEBI:83834"/>
        <dbReference type="EC" id="5.2.1.8"/>
    </reaction>
</comment>
<comment type="subcellular location">
    <subcellularLocation>
        <location>Cytoplasm</location>
    </subcellularLocation>
    <text evidence="1">About half TF is bound to the ribosome near the polypeptide exit tunnel while the other half is free in the cytoplasm.</text>
</comment>
<comment type="domain">
    <text evidence="1">Consists of 3 domains; the N-terminus binds the ribosome, the middle domain has PPIase activity, while the C-terminus has intrinsic chaperone activity on its own.</text>
</comment>
<comment type="similarity">
    <text evidence="1">Belongs to the FKBP-type PPIase family. Tig subfamily.</text>
</comment>
<name>TIG1_DESHY</name>
<accession>Q24SJ8</accession>
<evidence type="ECO:0000255" key="1">
    <source>
        <dbReference type="HAMAP-Rule" id="MF_00303"/>
    </source>
</evidence>
<gene>
    <name evidence="1" type="primary">tig1</name>
    <name type="ordered locus">DSY3205</name>
</gene>
<feature type="chain" id="PRO_0000256553" description="Trigger factor 1">
    <location>
        <begin position="1"/>
        <end position="426"/>
    </location>
</feature>
<feature type="domain" description="PPIase FKBP-type" evidence="1">
    <location>
        <begin position="163"/>
        <end position="248"/>
    </location>
</feature>
<sequence>MSVKMEKIEKNTVELEVTVDAKVFSAAVTKAAKALANKVNIPGFRKGKAPRTMVERYVGTAALYNDAVDDILGVEYMKAVNEAGIEPVDRPDVDLIQMEDGKELVFKAKVTVKPEVELGSYKGLEVEKTAAVVTDEELEQELQRKQEQHAKVLNLEEGTVQAQDTVNIDFAGSVDGVAFEGGTAEGYDLVIGSGSFIPGFEEQLIGAQIGQEVDVNVRFPDEYHVADLQGKDALFKVKVNKLKRKEYAPLDDEFAKDISEFETLDELKADLRDKLMTAAEQRAEMEQKNAIVAKAVENASVEIPEAMVNSRIDMMLDDMAQNLSYQGLDLETYCHYTGTSMDTMREELRPRASENLKTELVLEAIAKVEGITVSEEELNNELAKLAERYQTSPENLKQALMARGDMGMYRQSLVSEKTVNFLVEQA</sequence>
<proteinExistence type="inferred from homology"/>